<proteinExistence type="evidence at protein level"/>
<feature type="chain" id="PRO_0000324522" description="Protein polyglycylase TTLL10">
    <location>
        <begin position="1"/>
        <end position="704"/>
    </location>
</feature>
<feature type="domain" description="TTL" evidence="3">
    <location>
        <begin position="169"/>
        <end position="540"/>
    </location>
</feature>
<feature type="region of interest" description="Disordered" evidence="4">
    <location>
        <begin position="1"/>
        <end position="32"/>
    </location>
</feature>
<feature type="region of interest" description="Disordered" evidence="4">
    <location>
        <begin position="46"/>
        <end position="125"/>
    </location>
</feature>
<feature type="region of interest" description="Disordered" evidence="4">
    <location>
        <begin position="137"/>
        <end position="170"/>
    </location>
</feature>
<feature type="region of interest" description="Disordered" evidence="4">
    <location>
        <begin position="565"/>
        <end position="704"/>
    </location>
</feature>
<feature type="compositionally biased region" description="Basic residues" evidence="4">
    <location>
        <begin position="93"/>
        <end position="105"/>
    </location>
</feature>
<feature type="compositionally biased region" description="Basic and acidic residues" evidence="4">
    <location>
        <begin position="114"/>
        <end position="125"/>
    </location>
</feature>
<feature type="compositionally biased region" description="Pro residues" evidence="4">
    <location>
        <begin position="576"/>
        <end position="588"/>
    </location>
</feature>
<feature type="compositionally biased region" description="Pro residues" evidence="4">
    <location>
        <begin position="596"/>
        <end position="612"/>
    </location>
</feature>
<feature type="compositionally biased region" description="Low complexity" evidence="4">
    <location>
        <begin position="616"/>
        <end position="629"/>
    </location>
</feature>
<feature type="compositionally biased region" description="Low complexity" evidence="4">
    <location>
        <begin position="654"/>
        <end position="667"/>
    </location>
</feature>
<feature type="binding site" evidence="1">
    <location>
        <position position="301"/>
    </location>
    <ligand>
        <name>ATP</name>
        <dbReference type="ChEBI" id="CHEBI:30616"/>
    </ligand>
</feature>
<feature type="binding site" evidence="1">
    <location>
        <begin position="307"/>
        <end position="308"/>
    </location>
    <ligand>
        <name>ATP</name>
        <dbReference type="ChEBI" id="CHEBI:30616"/>
    </ligand>
</feature>
<feature type="binding site" evidence="1">
    <location>
        <position position="307"/>
    </location>
    <ligand>
        <name>a protein</name>
        <dbReference type="ChEBI" id="CHEBI:16541"/>
    </ligand>
    <ligandPart>
        <name>L-glutamate residue</name>
        <dbReference type="ChEBI" id="CHEBI:29973"/>
        <note>L-glutamate acceptor residue in protein target</note>
    </ligandPart>
</feature>
<feature type="binding site" evidence="2">
    <location>
        <begin position="350"/>
        <end position="353"/>
    </location>
    <ligand>
        <name>ATP</name>
        <dbReference type="ChEBI" id="CHEBI:30616"/>
    </ligand>
</feature>
<feature type="binding site" evidence="2">
    <location>
        <begin position="363"/>
        <end position="365"/>
    </location>
    <ligand>
        <name>ATP</name>
        <dbReference type="ChEBI" id="CHEBI:30616"/>
    </ligand>
</feature>
<feature type="binding site" evidence="1">
    <location>
        <begin position="406"/>
        <end position="407"/>
    </location>
    <ligand>
        <name>ATP</name>
        <dbReference type="ChEBI" id="CHEBI:30616"/>
    </ligand>
</feature>
<feature type="binding site" evidence="1">
    <location>
        <position position="486"/>
    </location>
    <ligand>
        <name>Mg(2+)</name>
        <dbReference type="ChEBI" id="CHEBI:18420"/>
        <label>1</label>
    </ligand>
</feature>
<feature type="binding site" evidence="1">
    <location>
        <position position="499"/>
    </location>
    <ligand>
        <name>Mg(2+)</name>
        <dbReference type="ChEBI" id="CHEBI:18420"/>
        <label>1</label>
    </ligand>
</feature>
<feature type="binding site" evidence="1">
    <location>
        <position position="499"/>
    </location>
    <ligand>
        <name>Mg(2+)</name>
        <dbReference type="ChEBI" id="CHEBI:18420"/>
        <label>2</label>
    </ligand>
</feature>
<feature type="binding site" evidence="1">
    <location>
        <position position="501"/>
    </location>
    <ligand>
        <name>Mg(2+)</name>
        <dbReference type="ChEBI" id="CHEBI:18420"/>
        <label>2</label>
    </ligand>
</feature>
<feature type="site" description="Essential for specifying elongation versus initiation step of the polyglycylase activity" evidence="1">
    <location>
        <position position="307"/>
    </location>
</feature>
<feature type="splice variant" id="VSP_032265" description="In isoform 2." evidence="9">
    <original>SEAQAEAAAQDLGRLPSPSKVGAAVCRIQG</original>
    <variation>R</variation>
    <location>
        <begin position="15"/>
        <end position="44"/>
    </location>
</feature>
<feature type="mutagenesis site" description="Loss of NAP1 polyglycylase activity." evidence="6">
    <original>E</original>
    <variation>V</variation>
    <location>
        <position position="499"/>
    </location>
</feature>
<feature type="sequence conflict" description="In Ref. 2; BAE21500." evidence="11" ref="2">
    <original>N</original>
    <variation>H</variation>
    <location>
        <position position="578"/>
    </location>
</feature>
<feature type="sequence conflict" description="In Ref. 2; BAE21500." evidence="11" ref="2">
    <original>AN</original>
    <variation>PH</variation>
    <location>
        <begin position="585"/>
        <end position="586"/>
    </location>
</feature>
<feature type="sequence conflict" description="In Ref. 2; BAE21500." evidence="11" ref="2">
    <original>H</original>
    <variation>N</variation>
    <location>
        <position position="596"/>
    </location>
</feature>
<feature type="sequence conflict" description="In Ref. 2; BAE21500." evidence="11" ref="2">
    <original>N</original>
    <variation>H</variation>
    <location>
        <position position="600"/>
    </location>
</feature>
<accession>A4Q9F3</accession>
<accession>Q3V0K4</accession>
<sequence length="704" mass="79250">MALHPQAGRPHRDGSEAQAEAAAQDLGRLPSPSKVGAAVCRIQGLGHRAARRPRRGIGTTSASRVPRPGALMPATRNRPRFIHCRGQPPRTRVSSKRSKRSRIHPCHTEVPGWTHEKQMGSSVKERLRPELSQLDQDADDLEEEEAARLPVTSPDGLLMEGDKQPSPGQGPFFYIGGTNGASIISNYCESKGWQRTQDSHCEDYKLKWCEIKCRDNYCSFREGQQLLFQLPNNKLLTTKIGLLSALREHARTLSKARMLPSTQTKVLKMEEFFPETYRLDIRDERQAFFALFDETQMWICKPTASNQGKGIFLIRSQEEAAALQAKTQSIEDDPIYRKMPFRAPQARVVQRYVQNPLLLDGKKFDVRSYMLIACAMPYMVFFGHGYARLTLSLYNPHSSDLSGHLTNQFMQKKSPLYTLLKESTVWTMEHLNRYINDKFRKTKGLPRDWVFTTFTKRMQQIMSHCFLAVKSKLECKLGYFDLIGCDFLIDENFKVWLLEMNANPALHTNCEVLKAVIPGVVIETLDLALETCQKSLHSQKMLPLLSQRRFVLLYNGETTDLWPRLASSRPLNRLPNPNPNPNPNANPHPHPHPNPHPHPNPHPNANPHPPRPTCEAASSALSSARAAISERPGARKSMPSRGAPVCTPRKSRLSDSSGSSIAESEPSLCSGSLEGSRDTAREPSLGPPEEEREEEQRSTSHRGS</sequence>
<comment type="function">
    <text evidence="6 7 8">Polyglycylase which modifies both tubulin and non-tubulin proteins, generating polyglycine side chains of variable lengths on the gamma-carboxyl groups of specific glutamate residues of target proteins (PubMed:18331838, PubMed:19427864, PubMed:19524510). Involved in the elongation step rather than the initiation step of the polyglycylation reaction (PubMed:18331838, PubMed:19427864, PubMed:19524510). Polyglycylates alpha-tubulin and beta-tubulin (PubMed:19427864, PubMed:19524510). Polyglycylates non-tubulin proteins such as nucleosome assembly protein NAP1 (PubMed:18331838).</text>
</comment>
<comment type="catalytic activity">
    <molecule>Protein polyglycylase TTLL10</molecule>
    <reaction evidence="6 7 8">
        <text>(glycyl)(n)-glycyl-L-glutamyl-[protein] + glycine + ATP = (glycyl)(n+1)-glycyl-L-glutamyl-[protein] + ADP + phosphate + H(+)</text>
        <dbReference type="Rhea" id="RHEA:67184"/>
        <dbReference type="Rhea" id="RHEA-COMP:17208"/>
        <dbReference type="Rhea" id="RHEA-COMP:17209"/>
        <dbReference type="ChEBI" id="CHEBI:15378"/>
        <dbReference type="ChEBI" id="CHEBI:30616"/>
        <dbReference type="ChEBI" id="CHEBI:43474"/>
        <dbReference type="ChEBI" id="CHEBI:57305"/>
        <dbReference type="ChEBI" id="CHEBI:167891"/>
        <dbReference type="ChEBI" id="CHEBI:456216"/>
    </reaction>
    <physiologicalReaction direction="left-to-right" evidence="12 13 14">
        <dbReference type="Rhea" id="RHEA:67185"/>
    </physiologicalReaction>
</comment>
<comment type="cofactor">
    <cofactor evidence="1">
        <name>Mg(2+)</name>
        <dbReference type="ChEBI" id="CHEBI:18420"/>
    </cofactor>
</comment>
<comment type="subcellular location">
    <subcellularLocation>
        <location evidence="7 8">Cytoplasm</location>
        <location evidence="7 8">Cytoskeleton</location>
    </subcellularLocation>
    <subcellularLocation>
        <location evidence="11">Cell projection</location>
        <location evidence="11">Cilium</location>
    </subcellularLocation>
    <subcellularLocation>
        <location evidence="11">Cytoplasm</location>
        <location evidence="11">Cytoskeleton</location>
        <location evidence="11">Cilium axoneme</location>
    </subcellularLocation>
</comment>
<comment type="alternative products">
    <event type="alternative splicing"/>
    <isoform>
        <id>A4Q9F3-1</id>
        <name>1</name>
        <sequence type="displayed"/>
    </isoform>
    <isoform>
        <id>A4Q9F3-2</id>
        <name>2</name>
        <sequence type="described" ref="VSP_032265"/>
    </isoform>
</comment>
<comment type="tissue specificity">
    <text evidence="5">Highly expressed in testis (PubMed:17499049). Expressed in brain, heart, kidney, liver, lung, muscle and trachea (PubMed:17499049).</text>
</comment>
<comment type="domain">
    <text evidence="1">Gln-307 is the main determinant for regioselectivity, which segregates between initiases and elongases in all tubulin--tyrosine ligase family. A glutamine residue at this position is found in elongases TTLL6, TTLL9, TTLL11, TTLL13, TTLL10 and favors glutamate-chain elongation, whereas an arginine residue is found in initiases TTLL2, TTLL4, TTLL5, TTLL3, TTLL8 and favors initiation.</text>
</comment>
<reference key="1">
    <citation type="journal article" date="2007" name="Mol. Cell">
        <title>A targeted multienzyme mechanism for selective microtubule polyglutamylation.</title>
        <authorList>
            <person name="van Dijk J."/>
            <person name="Rogowski K."/>
            <person name="Miro J."/>
            <person name="Lacroix B."/>
            <person name="Edde B."/>
            <person name="Janke C."/>
        </authorList>
    </citation>
    <scope>NUCLEOTIDE SEQUENCE [MRNA] (ISOFORM 1)</scope>
    <scope>TISSUE SPECIFICITY</scope>
    <source>
        <strain>C57BL/6J</strain>
        <tissue>Testis</tissue>
    </source>
</reference>
<reference key="2">
    <citation type="journal article" date="2005" name="Science">
        <title>The transcriptional landscape of the mammalian genome.</title>
        <authorList>
            <person name="Carninci P."/>
            <person name="Kasukawa T."/>
            <person name="Katayama S."/>
            <person name="Gough J."/>
            <person name="Frith M.C."/>
            <person name="Maeda N."/>
            <person name="Oyama R."/>
            <person name="Ravasi T."/>
            <person name="Lenhard B."/>
            <person name="Wells C."/>
            <person name="Kodzius R."/>
            <person name="Shimokawa K."/>
            <person name="Bajic V.B."/>
            <person name="Brenner S.E."/>
            <person name="Batalov S."/>
            <person name="Forrest A.R."/>
            <person name="Zavolan M."/>
            <person name="Davis M.J."/>
            <person name="Wilming L.G."/>
            <person name="Aidinis V."/>
            <person name="Allen J.E."/>
            <person name="Ambesi-Impiombato A."/>
            <person name="Apweiler R."/>
            <person name="Aturaliya R.N."/>
            <person name="Bailey T.L."/>
            <person name="Bansal M."/>
            <person name="Baxter L."/>
            <person name="Beisel K.W."/>
            <person name="Bersano T."/>
            <person name="Bono H."/>
            <person name="Chalk A.M."/>
            <person name="Chiu K.P."/>
            <person name="Choudhary V."/>
            <person name="Christoffels A."/>
            <person name="Clutterbuck D.R."/>
            <person name="Crowe M.L."/>
            <person name="Dalla E."/>
            <person name="Dalrymple B.P."/>
            <person name="de Bono B."/>
            <person name="Della Gatta G."/>
            <person name="di Bernardo D."/>
            <person name="Down T."/>
            <person name="Engstrom P."/>
            <person name="Fagiolini M."/>
            <person name="Faulkner G."/>
            <person name="Fletcher C.F."/>
            <person name="Fukushima T."/>
            <person name="Furuno M."/>
            <person name="Futaki S."/>
            <person name="Gariboldi M."/>
            <person name="Georgii-Hemming P."/>
            <person name="Gingeras T.R."/>
            <person name="Gojobori T."/>
            <person name="Green R.E."/>
            <person name="Gustincich S."/>
            <person name="Harbers M."/>
            <person name="Hayashi Y."/>
            <person name="Hensch T.K."/>
            <person name="Hirokawa N."/>
            <person name="Hill D."/>
            <person name="Huminiecki L."/>
            <person name="Iacono M."/>
            <person name="Ikeo K."/>
            <person name="Iwama A."/>
            <person name="Ishikawa T."/>
            <person name="Jakt M."/>
            <person name="Kanapin A."/>
            <person name="Katoh M."/>
            <person name="Kawasawa Y."/>
            <person name="Kelso J."/>
            <person name="Kitamura H."/>
            <person name="Kitano H."/>
            <person name="Kollias G."/>
            <person name="Krishnan S.P."/>
            <person name="Kruger A."/>
            <person name="Kummerfeld S.K."/>
            <person name="Kurochkin I.V."/>
            <person name="Lareau L.F."/>
            <person name="Lazarevic D."/>
            <person name="Lipovich L."/>
            <person name="Liu J."/>
            <person name="Liuni S."/>
            <person name="McWilliam S."/>
            <person name="Madan Babu M."/>
            <person name="Madera M."/>
            <person name="Marchionni L."/>
            <person name="Matsuda H."/>
            <person name="Matsuzawa S."/>
            <person name="Miki H."/>
            <person name="Mignone F."/>
            <person name="Miyake S."/>
            <person name="Morris K."/>
            <person name="Mottagui-Tabar S."/>
            <person name="Mulder N."/>
            <person name="Nakano N."/>
            <person name="Nakauchi H."/>
            <person name="Ng P."/>
            <person name="Nilsson R."/>
            <person name="Nishiguchi S."/>
            <person name="Nishikawa S."/>
            <person name="Nori F."/>
            <person name="Ohara O."/>
            <person name="Okazaki Y."/>
            <person name="Orlando V."/>
            <person name="Pang K.C."/>
            <person name="Pavan W.J."/>
            <person name="Pavesi G."/>
            <person name="Pesole G."/>
            <person name="Petrovsky N."/>
            <person name="Piazza S."/>
            <person name="Reed J."/>
            <person name="Reid J.F."/>
            <person name="Ring B.Z."/>
            <person name="Ringwald M."/>
            <person name="Rost B."/>
            <person name="Ruan Y."/>
            <person name="Salzberg S.L."/>
            <person name="Sandelin A."/>
            <person name="Schneider C."/>
            <person name="Schoenbach C."/>
            <person name="Sekiguchi K."/>
            <person name="Semple C.A."/>
            <person name="Seno S."/>
            <person name="Sessa L."/>
            <person name="Sheng Y."/>
            <person name="Shibata Y."/>
            <person name="Shimada H."/>
            <person name="Shimada K."/>
            <person name="Silva D."/>
            <person name="Sinclair B."/>
            <person name="Sperling S."/>
            <person name="Stupka E."/>
            <person name="Sugiura K."/>
            <person name="Sultana R."/>
            <person name="Takenaka Y."/>
            <person name="Taki K."/>
            <person name="Tammoja K."/>
            <person name="Tan S.L."/>
            <person name="Tang S."/>
            <person name="Taylor M.S."/>
            <person name="Tegner J."/>
            <person name="Teichmann S.A."/>
            <person name="Ueda H.R."/>
            <person name="van Nimwegen E."/>
            <person name="Verardo R."/>
            <person name="Wei C.L."/>
            <person name="Yagi K."/>
            <person name="Yamanishi H."/>
            <person name="Zabarovsky E."/>
            <person name="Zhu S."/>
            <person name="Zimmer A."/>
            <person name="Hide W."/>
            <person name="Bult C."/>
            <person name="Grimmond S.M."/>
            <person name="Teasdale R.D."/>
            <person name="Liu E.T."/>
            <person name="Brusic V."/>
            <person name="Quackenbush J."/>
            <person name="Wahlestedt C."/>
            <person name="Mattick J.S."/>
            <person name="Hume D.A."/>
            <person name="Kai C."/>
            <person name="Sasaki D."/>
            <person name="Tomaru Y."/>
            <person name="Fukuda S."/>
            <person name="Kanamori-Katayama M."/>
            <person name="Suzuki M."/>
            <person name="Aoki J."/>
            <person name="Arakawa T."/>
            <person name="Iida J."/>
            <person name="Imamura K."/>
            <person name="Itoh M."/>
            <person name="Kato T."/>
            <person name="Kawaji H."/>
            <person name="Kawagashira N."/>
            <person name="Kawashima T."/>
            <person name="Kojima M."/>
            <person name="Kondo S."/>
            <person name="Konno H."/>
            <person name="Nakano K."/>
            <person name="Ninomiya N."/>
            <person name="Nishio T."/>
            <person name="Okada M."/>
            <person name="Plessy C."/>
            <person name="Shibata K."/>
            <person name="Shiraki T."/>
            <person name="Suzuki S."/>
            <person name="Tagami M."/>
            <person name="Waki K."/>
            <person name="Watahiki A."/>
            <person name="Okamura-Oho Y."/>
            <person name="Suzuki H."/>
            <person name="Kawai J."/>
            <person name="Hayashizaki Y."/>
        </authorList>
    </citation>
    <scope>NUCLEOTIDE SEQUENCE [LARGE SCALE MRNA] (ISOFORM 2)</scope>
    <source>
        <strain>C57BL/6J</strain>
        <tissue>Testis</tissue>
    </source>
</reference>
<reference key="3">
    <citation type="journal article" date="2009" name="Cell">
        <title>Evolutionary divergence of enzymatic mechanisms for posttranslational polyglycylation.</title>
        <authorList>
            <person name="Rogowski K."/>
            <person name="Juge F."/>
            <person name="van Dijk J."/>
            <person name="Wloga D."/>
            <person name="Strub J.-M."/>
            <person name="Levilliers N."/>
            <person name="Thomas D."/>
            <person name="Bre M.-H."/>
            <person name="Van Dorsselaer A."/>
            <person name="Gaertig J."/>
            <person name="Janke C."/>
        </authorList>
    </citation>
    <scope>FUNCTION</scope>
    <scope>CATALYTIC ACTIVITY</scope>
    <scope>SUBCELLULAR LOCATION</scope>
</reference>
<reference key="4">
    <citation type="journal article" date="2008" name="FEBS Lett.">
        <title>TTLL10 is a protein polyglycylase that can modify nucleosome assembly protein 1.</title>
        <authorList>
            <person name="Ikegami K."/>
            <person name="Horigome D."/>
            <person name="Mukai M."/>
            <person name="Livnat I."/>
            <person name="MacGregor G.R."/>
            <person name="Setou M."/>
        </authorList>
    </citation>
    <scope>FUNCTION</scope>
    <scope>CATALYTIC ACTIVITY</scope>
    <scope>MUTAGENESIS OF GLU-499</scope>
</reference>
<reference key="5">
    <citation type="journal article" date="2009" name="FEBS Lett.">
        <title>TTLL10 can perform tubulin glycylation when co-expressed with TTLL8.</title>
        <authorList>
            <person name="Ikegami K."/>
            <person name="Setou M."/>
        </authorList>
    </citation>
    <scope>FUNCTION</scope>
    <scope>CATALYTIC ACTIVITY</scope>
    <scope>SUBCELLULAR LOCATION</scope>
</reference>
<organism>
    <name type="scientific">Mus musculus</name>
    <name type="common">Mouse</name>
    <dbReference type="NCBI Taxonomy" id="10090"/>
    <lineage>
        <taxon>Eukaryota</taxon>
        <taxon>Metazoa</taxon>
        <taxon>Chordata</taxon>
        <taxon>Craniata</taxon>
        <taxon>Vertebrata</taxon>
        <taxon>Euteleostomi</taxon>
        <taxon>Mammalia</taxon>
        <taxon>Eutheria</taxon>
        <taxon>Euarchontoglires</taxon>
        <taxon>Glires</taxon>
        <taxon>Rodentia</taxon>
        <taxon>Myomorpha</taxon>
        <taxon>Muroidea</taxon>
        <taxon>Muridae</taxon>
        <taxon>Murinae</taxon>
        <taxon>Mus</taxon>
        <taxon>Mus</taxon>
    </lineage>
</organism>
<dbReference type="EC" id="6.3.2.-" evidence="6 7 8"/>
<dbReference type="EMBL" id="AM690754">
    <property type="protein sequence ID" value="CAM84331.1"/>
    <property type="molecule type" value="mRNA"/>
</dbReference>
<dbReference type="EMBL" id="AK133079">
    <property type="protein sequence ID" value="BAE21500.1"/>
    <property type="molecule type" value="mRNA"/>
</dbReference>
<dbReference type="CCDS" id="CCDS19058.1">
    <molecule id="A4Q9F3-2"/>
</dbReference>
<dbReference type="CCDS" id="CCDS89873.1">
    <molecule id="A4Q9F3-1"/>
</dbReference>
<dbReference type="RefSeq" id="NP_083540.1">
    <property type="nucleotide sequence ID" value="NM_029264.2"/>
</dbReference>
<dbReference type="SMR" id="A4Q9F3"/>
<dbReference type="FunCoup" id="A4Q9F3">
    <property type="interactions" value="66"/>
</dbReference>
<dbReference type="STRING" id="10090.ENSMUSP00000055671"/>
<dbReference type="iPTMnet" id="A4Q9F3"/>
<dbReference type="PhosphoSitePlus" id="A4Q9F3"/>
<dbReference type="SwissPalm" id="A4Q9F3"/>
<dbReference type="PaxDb" id="10090-ENSMUSP00000055671"/>
<dbReference type="ProteomicsDB" id="298335">
    <molecule id="A4Q9F3-1"/>
</dbReference>
<dbReference type="ProteomicsDB" id="298336">
    <molecule id="A4Q9F3-2"/>
</dbReference>
<dbReference type="DNASU" id="330010"/>
<dbReference type="GeneID" id="330010"/>
<dbReference type="KEGG" id="mmu:330010"/>
<dbReference type="AGR" id="MGI:1921855"/>
<dbReference type="CTD" id="254173"/>
<dbReference type="MGI" id="MGI:1921855">
    <property type="gene designation" value="Ttll10"/>
</dbReference>
<dbReference type="eggNOG" id="KOG2157">
    <property type="taxonomic scope" value="Eukaryota"/>
</dbReference>
<dbReference type="InParanoid" id="A4Q9F3"/>
<dbReference type="PhylomeDB" id="A4Q9F3"/>
<dbReference type="Reactome" id="R-MMU-8955332">
    <property type="pathway name" value="Carboxyterminal post-translational modifications of tubulin"/>
</dbReference>
<dbReference type="BioGRID-ORCS" id="330010">
    <property type="hits" value="1 hit in 77 CRISPR screens"/>
</dbReference>
<dbReference type="ChiTaRS" id="Ttll10">
    <property type="organism name" value="mouse"/>
</dbReference>
<dbReference type="PRO" id="PR:A4Q9F3"/>
<dbReference type="Proteomes" id="UP000000589">
    <property type="component" value="Unplaced"/>
</dbReference>
<dbReference type="RNAct" id="A4Q9F3">
    <property type="molecule type" value="protein"/>
</dbReference>
<dbReference type="GO" id="GO:0005930">
    <property type="term" value="C:axoneme"/>
    <property type="evidence" value="ECO:0000314"/>
    <property type="project" value="UniProtKB"/>
</dbReference>
<dbReference type="GO" id="GO:0005929">
    <property type="term" value="C:cilium"/>
    <property type="evidence" value="ECO:0000314"/>
    <property type="project" value="UniProtKB"/>
</dbReference>
<dbReference type="GO" id="GO:0005874">
    <property type="term" value="C:microtubule"/>
    <property type="evidence" value="ECO:0007669"/>
    <property type="project" value="UniProtKB-KW"/>
</dbReference>
<dbReference type="GO" id="GO:0015630">
    <property type="term" value="C:microtubule cytoskeleton"/>
    <property type="evidence" value="ECO:0000314"/>
    <property type="project" value="UniProtKB"/>
</dbReference>
<dbReference type="GO" id="GO:0005524">
    <property type="term" value="F:ATP binding"/>
    <property type="evidence" value="ECO:0007669"/>
    <property type="project" value="UniProtKB-KW"/>
</dbReference>
<dbReference type="GO" id="GO:0046872">
    <property type="term" value="F:metal ion binding"/>
    <property type="evidence" value="ECO:0007669"/>
    <property type="project" value="UniProtKB-KW"/>
</dbReference>
<dbReference type="GO" id="GO:0070735">
    <property type="term" value="F:protein-glycine ligase activity"/>
    <property type="evidence" value="ECO:0000314"/>
    <property type="project" value="UniProtKB"/>
</dbReference>
<dbReference type="GO" id="GO:0070737">
    <property type="term" value="F:protein-glycine ligase activity, elongating"/>
    <property type="evidence" value="ECO:0000314"/>
    <property type="project" value="UniProtKB"/>
</dbReference>
<dbReference type="GO" id="GO:0018094">
    <property type="term" value="P:protein polyglycylation"/>
    <property type="evidence" value="ECO:0000314"/>
    <property type="project" value="UniProtKB"/>
</dbReference>
<dbReference type="FunFam" id="3.30.470.20:FF:000046">
    <property type="entry name" value="inactive polyglycylase TTLL10"/>
    <property type="match status" value="1"/>
</dbReference>
<dbReference type="Gene3D" id="3.30.470.20">
    <property type="entry name" value="ATP-grasp fold, B domain"/>
    <property type="match status" value="1"/>
</dbReference>
<dbReference type="InterPro" id="IPR004344">
    <property type="entry name" value="TTL/TTLL_fam"/>
</dbReference>
<dbReference type="InterPro" id="IPR027752">
    <property type="entry name" value="TTLL10"/>
</dbReference>
<dbReference type="PANTHER" id="PTHR46810">
    <property type="entry name" value="INACTIVE POLYGLYCYLASE TTLL10"/>
    <property type="match status" value="1"/>
</dbReference>
<dbReference type="PANTHER" id="PTHR46810:SF1">
    <property type="entry name" value="INACTIVE POLYGLYCYLASE TTLL10"/>
    <property type="match status" value="1"/>
</dbReference>
<dbReference type="Pfam" id="PF03133">
    <property type="entry name" value="TTL"/>
    <property type="match status" value="1"/>
</dbReference>
<dbReference type="SUPFAM" id="SSF56059">
    <property type="entry name" value="Glutathione synthetase ATP-binding domain-like"/>
    <property type="match status" value="1"/>
</dbReference>
<dbReference type="PROSITE" id="PS51221">
    <property type="entry name" value="TTL"/>
    <property type="match status" value="1"/>
</dbReference>
<gene>
    <name evidence="15" type="primary">Ttll10</name>
</gene>
<keyword id="KW-0025">Alternative splicing</keyword>
<keyword id="KW-0067">ATP-binding</keyword>
<keyword id="KW-0966">Cell projection</keyword>
<keyword id="KW-0969">Cilium</keyword>
<keyword id="KW-0963">Cytoplasm</keyword>
<keyword id="KW-0206">Cytoskeleton</keyword>
<keyword id="KW-0436">Ligase</keyword>
<keyword id="KW-0460">Magnesium</keyword>
<keyword id="KW-0479">Metal-binding</keyword>
<keyword id="KW-0493">Microtubule</keyword>
<keyword id="KW-0547">Nucleotide-binding</keyword>
<keyword id="KW-1185">Reference proteome</keyword>
<evidence type="ECO:0000250" key="1">
    <source>
        <dbReference type="UniProtKB" id="A4Q9E8"/>
    </source>
</evidence>
<evidence type="ECO:0000250" key="2">
    <source>
        <dbReference type="UniProtKB" id="Q6ZT98"/>
    </source>
</evidence>
<evidence type="ECO:0000255" key="3">
    <source>
        <dbReference type="PROSITE-ProRule" id="PRU00568"/>
    </source>
</evidence>
<evidence type="ECO:0000256" key="4">
    <source>
        <dbReference type="SAM" id="MobiDB-lite"/>
    </source>
</evidence>
<evidence type="ECO:0000269" key="5">
    <source>
    </source>
</evidence>
<evidence type="ECO:0000269" key="6">
    <source>
    </source>
</evidence>
<evidence type="ECO:0000269" key="7">
    <source>
    </source>
</evidence>
<evidence type="ECO:0000269" key="8">
    <source>
    </source>
</evidence>
<evidence type="ECO:0000303" key="9">
    <source>
    </source>
</evidence>
<evidence type="ECO:0000303" key="10">
    <source>
    </source>
</evidence>
<evidence type="ECO:0000305" key="11"/>
<evidence type="ECO:0000305" key="12">
    <source>
    </source>
</evidence>
<evidence type="ECO:0000305" key="13">
    <source>
    </source>
</evidence>
<evidence type="ECO:0000305" key="14">
    <source>
    </source>
</evidence>
<evidence type="ECO:0000312" key="15">
    <source>
        <dbReference type="MGI" id="MGI:1921855"/>
    </source>
</evidence>
<protein>
    <recommendedName>
        <fullName evidence="10">Protein polyglycylase TTLL10</fullName>
        <ecNumber evidence="6 7 8">6.3.2.-</ecNumber>
    </recommendedName>
    <alternativeName>
        <fullName>Tubulin--tyrosine ligase-like protein 10</fullName>
    </alternativeName>
</protein>
<name>TTL10_MOUSE</name>